<feature type="chain" id="PRO_0000047852" description="DNA-directed RNA polymerase subunit beta">
    <location>
        <begin position="1"/>
        <end position="1382"/>
    </location>
</feature>
<feature type="sequence conflict" description="In Ref. 1; AAM73633." evidence="2" ref="1">
    <original>GS</original>
    <variation>D</variation>
    <location>
        <begin position="6"/>
        <end position="7"/>
    </location>
</feature>
<feature type="sequence conflict" description="In Ref. 1; AAM73633." evidence="2" ref="1">
    <original>DAVPRLS</original>
    <variation>VFFVGSL</variation>
    <location>
        <begin position="18"/>
        <end position="24"/>
    </location>
</feature>
<feature type="sequence conflict" description="In Ref. 1; AAM73633." evidence="2" ref="1">
    <original>IDIRDS</original>
    <variation>YNSRF</variation>
    <location>
        <begin position="29"/>
        <end position="34"/>
    </location>
</feature>
<feature type="sequence conflict" description="In Ref. 1; AAM73633." evidence="2" ref="1">
    <original>R</original>
    <variation>K</variation>
    <location>
        <position position="76"/>
    </location>
</feature>
<feature type="sequence conflict" description="In Ref. 1; AAM73633." evidence="2" ref="1">
    <original>V</original>
    <variation>L</variation>
    <location>
        <position position="807"/>
    </location>
</feature>
<feature type="sequence conflict" description="In Ref. 1; AAM73633." evidence="2" ref="1">
    <original>PLGPEKIMRSVPDVNE</original>
    <variation>LRSREDNAVCLMY</variation>
    <location>
        <begin position="869"/>
        <end position="884"/>
    </location>
</feature>
<feature type="sequence conflict" description="In Ref. 1; AAM73633." evidence="2" ref="1">
    <original>GIVNIGAEVSASSILVGKVTP</original>
    <variation>DRDIVPRYLQVVSGGQGYA</variation>
    <location>
        <begin position="894"/>
        <end position="914"/>
    </location>
</feature>
<proteinExistence type="inferred from homology"/>
<dbReference type="EC" id="2.7.7.6" evidence="1"/>
<dbReference type="EMBL" id="AF389472">
    <property type="protein sequence ID" value="AAM73633.1"/>
    <property type="status" value="ALT_INIT"/>
    <property type="molecule type" value="Genomic_DNA"/>
</dbReference>
<dbReference type="EMBL" id="CP001079">
    <property type="protein sequence ID" value="ACM49073.1"/>
    <property type="status" value="ALT_INIT"/>
    <property type="molecule type" value="Genomic_DNA"/>
</dbReference>
<dbReference type="RefSeq" id="WP_010267184.1">
    <property type="nucleotide sequence ID" value="NC_012026.1"/>
</dbReference>
<dbReference type="SMR" id="Q8KWX4"/>
<dbReference type="STRING" id="320483.AMF_194"/>
<dbReference type="GeneID" id="7398648"/>
<dbReference type="KEGG" id="amf:AMF_194"/>
<dbReference type="PATRIC" id="fig|320483.3.peg.221"/>
<dbReference type="eggNOG" id="COG0085">
    <property type="taxonomic scope" value="Bacteria"/>
</dbReference>
<dbReference type="HOGENOM" id="CLU_000524_4_1_5"/>
<dbReference type="Proteomes" id="UP000007307">
    <property type="component" value="Chromosome"/>
</dbReference>
<dbReference type="GO" id="GO:0000428">
    <property type="term" value="C:DNA-directed RNA polymerase complex"/>
    <property type="evidence" value="ECO:0007669"/>
    <property type="project" value="UniProtKB-KW"/>
</dbReference>
<dbReference type="GO" id="GO:0003677">
    <property type="term" value="F:DNA binding"/>
    <property type="evidence" value="ECO:0007669"/>
    <property type="project" value="UniProtKB-UniRule"/>
</dbReference>
<dbReference type="GO" id="GO:0003899">
    <property type="term" value="F:DNA-directed RNA polymerase activity"/>
    <property type="evidence" value="ECO:0007669"/>
    <property type="project" value="UniProtKB-UniRule"/>
</dbReference>
<dbReference type="GO" id="GO:0032549">
    <property type="term" value="F:ribonucleoside binding"/>
    <property type="evidence" value="ECO:0007669"/>
    <property type="project" value="InterPro"/>
</dbReference>
<dbReference type="GO" id="GO:0006351">
    <property type="term" value="P:DNA-templated transcription"/>
    <property type="evidence" value="ECO:0007669"/>
    <property type="project" value="UniProtKB-UniRule"/>
</dbReference>
<dbReference type="CDD" id="cd00653">
    <property type="entry name" value="RNA_pol_B_RPB2"/>
    <property type="match status" value="1"/>
</dbReference>
<dbReference type="Gene3D" id="2.40.50.100">
    <property type="match status" value="1"/>
</dbReference>
<dbReference type="Gene3D" id="2.40.50.150">
    <property type="match status" value="1"/>
</dbReference>
<dbReference type="Gene3D" id="3.90.1100.10">
    <property type="match status" value="2"/>
</dbReference>
<dbReference type="Gene3D" id="2.30.150.10">
    <property type="entry name" value="DNA-directed RNA polymerase, beta subunit, external 1 domain"/>
    <property type="match status" value="1"/>
</dbReference>
<dbReference type="Gene3D" id="2.40.270.10">
    <property type="entry name" value="DNA-directed RNA polymerase, subunit 2, domain 6"/>
    <property type="match status" value="2"/>
</dbReference>
<dbReference type="Gene3D" id="3.90.1800.10">
    <property type="entry name" value="RNA polymerase alpha subunit dimerisation domain"/>
    <property type="match status" value="1"/>
</dbReference>
<dbReference type="Gene3D" id="3.90.1110.10">
    <property type="entry name" value="RNA polymerase Rpb2, domain 2"/>
    <property type="match status" value="2"/>
</dbReference>
<dbReference type="HAMAP" id="MF_01321">
    <property type="entry name" value="RNApol_bact_RpoB"/>
    <property type="match status" value="1"/>
</dbReference>
<dbReference type="InterPro" id="IPR042107">
    <property type="entry name" value="DNA-dir_RNA_pol_bsu_ext_1_sf"/>
</dbReference>
<dbReference type="InterPro" id="IPR019462">
    <property type="entry name" value="DNA-dir_RNA_pol_bsu_external_1"/>
</dbReference>
<dbReference type="InterPro" id="IPR015712">
    <property type="entry name" value="DNA-dir_RNA_pol_su2"/>
</dbReference>
<dbReference type="InterPro" id="IPR007120">
    <property type="entry name" value="DNA-dir_RNAP_su2_dom"/>
</dbReference>
<dbReference type="InterPro" id="IPR037033">
    <property type="entry name" value="DNA-dir_RNAP_su2_hyb_sf"/>
</dbReference>
<dbReference type="InterPro" id="IPR010243">
    <property type="entry name" value="RNA_pol_bsu_bac"/>
</dbReference>
<dbReference type="InterPro" id="IPR007121">
    <property type="entry name" value="RNA_pol_bsu_CS"/>
</dbReference>
<dbReference type="InterPro" id="IPR007644">
    <property type="entry name" value="RNA_pol_bsu_protrusion"/>
</dbReference>
<dbReference type="InterPro" id="IPR007642">
    <property type="entry name" value="RNA_pol_Rpb2_2"/>
</dbReference>
<dbReference type="InterPro" id="IPR037034">
    <property type="entry name" value="RNA_pol_Rpb2_2_sf"/>
</dbReference>
<dbReference type="InterPro" id="IPR007645">
    <property type="entry name" value="RNA_pol_Rpb2_3"/>
</dbReference>
<dbReference type="InterPro" id="IPR007641">
    <property type="entry name" value="RNA_pol_Rpb2_7"/>
</dbReference>
<dbReference type="InterPro" id="IPR014724">
    <property type="entry name" value="RNA_pol_RPB2_OB-fold"/>
</dbReference>
<dbReference type="NCBIfam" id="NF001616">
    <property type="entry name" value="PRK00405.1"/>
    <property type="match status" value="1"/>
</dbReference>
<dbReference type="NCBIfam" id="TIGR02013">
    <property type="entry name" value="rpoB"/>
    <property type="match status" value="1"/>
</dbReference>
<dbReference type="PANTHER" id="PTHR20856">
    <property type="entry name" value="DNA-DIRECTED RNA POLYMERASE I SUBUNIT 2"/>
    <property type="match status" value="1"/>
</dbReference>
<dbReference type="Pfam" id="PF04563">
    <property type="entry name" value="RNA_pol_Rpb2_1"/>
    <property type="match status" value="1"/>
</dbReference>
<dbReference type="Pfam" id="PF04561">
    <property type="entry name" value="RNA_pol_Rpb2_2"/>
    <property type="match status" value="2"/>
</dbReference>
<dbReference type="Pfam" id="PF04565">
    <property type="entry name" value="RNA_pol_Rpb2_3"/>
    <property type="match status" value="1"/>
</dbReference>
<dbReference type="Pfam" id="PF10385">
    <property type="entry name" value="RNA_pol_Rpb2_45"/>
    <property type="match status" value="1"/>
</dbReference>
<dbReference type="Pfam" id="PF00562">
    <property type="entry name" value="RNA_pol_Rpb2_6"/>
    <property type="match status" value="1"/>
</dbReference>
<dbReference type="Pfam" id="PF04560">
    <property type="entry name" value="RNA_pol_Rpb2_7"/>
    <property type="match status" value="1"/>
</dbReference>
<dbReference type="SUPFAM" id="SSF64484">
    <property type="entry name" value="beta and beta-prime subunits of DNA dependent RNA-polymerase"/>
    <property type="match status" value="1"/>
</dbReference>
<dbReference type="PROSITE" id="PS01166">
    <property type="entry name" value="RNA_POL_BETA"/>
    <property type="match status" value="1"/>
</dbReference>
<sequence length="1382" mass="154508">MSSAGGSSGPGYVLNDFDAVPRLSYAKSIDIRDSLTDLIRIQRDSYDAFIGIDRDGSSGIQSIFEAMFPIRDLLGRAVLEFVGYNIGEPQYDEYECIKRGITFSVPIRITLRFVVWKVQEVSFKEVKYVVDEDTSERSVKYMKEQEVSIGDLPMMTSYGTFIINGIERVIVSQMHRSPGVFFDSDKGKTYSSGKLIYSARVIPYRGSWLDFEFDIKDIIYFRIDKKRKLPVSYLLKALGMSNNDILDAFYDKVIYTRCDKGWRVPFIVDRFKGVRLSYDLMDVDGSVLVKANTRITLRIAKKLYADGLREYMVPFSGITGMFVAADLVDPSSGAVIVSAGETITSEHIVKLELFDISEIAFLNIDFLTVGPYVLNTLFLDKNMTQEDALFEIYRVLRSGESPNLDAVKSFFKGLFFESERYDLSVVGRIKLNSHLGLDVDENTTVLTKEDIVQVVKKLVLLRDGEGVVDDIDHLGNRRVRSVGEFIENQFRIGILRLERMIMDYMSSVNFDNAMPCDFVNPKVLATVLKDFFSSSQLSQFMDQTNPLSEVTHKRRLSALGPGGLTRERAGFEVRDVHPTHYGRICPIETPEGQNIGLISSLAIYAKINKYGFIESPYRKVENRVVTDKVEYLLAMQEGDYYIADAGAAIDENNRFVDDMLYCRHGGNFVMVKSEDVDYVDVSPKQIVSVAASLIPFLENNDANRALMGSNMQRQAVPLLKSEAPLVGTGMEFVVAAGSGAVVLAKRDGIVHRVDGSYIVIRAFDANKDECLGVDIYRLRKFQRSNHNTCINQRPVVKLGDYVKANDVIADGSAIDRGELALGKNVLVAFMSWQGYNFEDSIVISSDVVKRDVFTSIHIEEFECVVRDTPLGPEKIMRSVPDVNEESLSHLDDVGIVNIGAEVSASSILVGKVTPRPPVSLPPETKLLVTIFGEKVFDCVDSSLYLPPDVEGTVIDVHVFVRRGVEENDRSLLIKQSEISSFVKERDYEIDVVSEYFHDELRKLLRNAGVKVKGYSDLDSFFAEASDDTLWSTGLADAKVAAKVKDMRERFDSIVGEAHRKFEQKVDKLNYGYDLPQGVLTIVKVFVAVKHNLQPGDKMAGRHGNKGVISRIVPAEDMPHLEDGTPVDIILNSLGVPSRMNIGQILETHLGWAAVNLGKKIGRILDKGGPSMIADLRDFLDKIYDGQKLKSDIASMSSEALLVFANRLRKGVPMAAPVFEGPKDAQISKLLELAEVDPSGQVYLYDGRLGKKFDRKITVGYIYMLKLHHLVDDKIHARSVGPYGLVTQQPLGGKSHFGGQRFGEMECWALQAYGAAYTLQEMLTVKSDDIVGRVKIYESIIKGDSNFECGIPESFNVMVKELRSLCLNVVLKQDKEFTSGEVE</sequence>
<name>RPOB_ANAMF</name>
<organism>
    <name type="scientific">Anaplasma marginale (strain Florida)</name>
    <dbReference type="NCBI Taxonomy" id="320483"/>
    <lineage>
        <taxon>Bacteria</taxon>
        <taxon>Pseudomonadati</taxon>
        <taxon>Pseudomonadota</taxon>
        <taxon>Alphaproteobacteria</taxon>
        <taxon>Rickettsiales</taxon>
        <taxon>Anaplasmataceae</taxon>
        <taxon>Anaplasma</taxon>
    </lineage>
</organism>
<comment type="function">
    <text evidence="1">DNA-dependent RNA polymerase catalyzes the transcription of DNA into RNA using the four ribonucleoside triphosphates as substrates.</text>
</comment>
<comment type="catalytic activity">
    <reaction evidence="1">
        <text>RNA(n) + a ribonucleoside 5'-triphosphate = RNA(n+1) + diphosphate</text>
        <dbReference type="Rhea" id="RHEA:21248"/>
        <dbReference type="Rhea" id="RHEA-COMP:14527"/>
        <dbReference type="Rhea" id="RHEA-COMP:17342"/>
        <dbReference type="ChEBI" id="CHEBI:33019"/>
        <dbReference type="ChEBI" id="CHEBI:61557"/>
        <dbReference type="ChEBI" id="CHEBI:140395"/>
        <dbReference type="EC" id="2.7.7.6"/>
    </reaction>
</comment>
<comment type="subunit">
    <text evidence="1">The RNAP catalytic core consists of 2 alpha, 1 beta, 1 beta' and 1 omega subunit. When a sigma factor is associated with the core the holoenzyme is formed, which can initiate transcription.</text>
</comment>
<comment type="similarity">
    <text evidence="1">Belongs to the RNA polymerase beta chain family.</text>
</comment>
<comment type="sequence caution" evidence="2">
    <conflict type="erroneous initiation">
        <sequence resource="EMBL-CDS" id="AAM73633"/>
    </conflict>
</comment>
<comment type="sequence caution" evidence="2">
    <conflict type="erroneous initiation">
        <sequence resource="EMBL-CDS" id="ACM49073"/>
    </conflict>
</comment>
<accession>Q8KWX4</accession>
<accession>B9KHW1</accession>
<gene>
    <name evidence="1" type="primary">rpoB</name>
    <name type="ordered locus">AMF_194</name>
</gene>
<keyword id="KW-0240">DNA-directed RNA polymerase</keyword>
<keyword id="KW-0548">Nucleotidyltransferase</keyword>
<keyword id="KW-1185">Reference proteome</keyword>
<keyword id="KW-0804">Transcription</keyword>
<keyword id="KW-0808">Transferase</keyword>
<reference key="1">
    <citation type="journal article" date="2003" name="Int. J. Syst. Evol. Microbiol.">
        <title>RNA polymerase beta-subunit-based phylogeny of Ehrlichia spp., Anaplasma spp., Neorickettsia spp. and Wolbachia pipientis.</title>
        <authorList>
            <person name="Taillardat-Bisch A.V."/>
            <person name="Raoult D."/>
            <person name="Drancourt M."/>
        </authorList>
    </citation>
    <scope>NUCLEOTIDE SEQUENCE [GENOMIC DNA]</scope>
</reference>
<reference key="2">
    <citation type="journal article" date="2009" name="BMC Genomics">
        <title>Conservation in the face of diversity: multistrain analysis of an intracellular bacterium.</title>
        <authorList>
            <person name="Dark M.J."/>
            <person name="Herndon D.R."/>
            <person name="Kappmeyer L.S."/>
            <person name="Gonzales M.P."/>
            <person name="Nordeen E."/>
            <person name="Palmer G.H."/>
            <person name="Knowles D.P. Jr."/>
            <person name="Brayton K.A."/>
        </authorList>
    </citation>
    <scope>NUCLEOTIDE SEQUENCE [LARGE SCALE GENOMIC DNA]</scope>
    <source>
        <strain>Florida</strain>
    </source>
</reference>
<evidence type="ECO:0000255" key="1">
    <source>
        <dbReference type="HAMAP-Rule" id="MF_01321"/>
    </source>
</evidence>
<evidence type="ECO:0000305" key="2"/>
<protein>
    <recommendedName>
        <fullName evidence="1">DNA-directed RNA polymerase subunit beta</fullName>
        <shortName evidence="1">RNAP subunit beta</shortName>
        <ecNumber evidence="1">2.7.7.6</ecNumber>
    </recommendedName>
    <alternativeName>
        <fullName evidence="1">RNA polymerase subunit beta</fullName>
    </alternativeName>
    <alternativeName>
        <fullName evidence="1">Transcriptase subunit beta</fullName>
    </alternativeName>
</protein>